<accession>B7L4L9</accession>
<sequence>MKRIAFVFSTAPHGTAAGREGLDALLATSALTDDLAVFFIADGVFQLLSGQKPDAVLARDYIATFKLLGLYDIEQCWVCAASLRERGLDPQTPFVVEATPLEADALRRELANYDVILRF</sequence>
<organism>
    <name type="scientific">Escherichia coli (strain 55989 / EAEC)</name>
    <dbReference type="NCBI Taxonomy" id="585055"/>
    <lineage>
        <taxon>Bacteria</taxon>
        <taxon>Pseudomonadati</taxon>
        <taxon>Pseudomonadota</taxon>
        <taxon>Gammaproteobacteria</taxon>
        <taxon>Enterobacterales</taxon>
        <taxon>Enterobacteriaceae</taxon>
        <taxon>Escherichia</taxon>
    </lineage>
</organism>
<dbReference type="EMBL" id="CU928145">
    <property type="protein sequence ID" value="CAV00058.1"/>
    <property type="molecule type" value="Genomic_DNA"/>
</dbReference>
<dbReference type="RefSeq" id="WP_000820720.1">
    <property type="nucleotide sequence ID" value="NC_011748.1"/>
</dbReference>
<dbReference type="SMR" id="B7L4L9"/>
<dbReference type="GeneID" id="75206287"/>
<dbReference type="KEGG" id="eck:EC55989_3747"/>
<dbReference type="HOGENOM" id="CLU_155943_1_0_6"/>
<dbReference type="Proteomes" id="UP000000746">
    <property type="component" value="Chromosome"/>
</dbReference>
<dbReference type="GO" id="GO:0005737">
    <property type="term" value="C:cytoplasm"/>
    <property type="evidence" value="ECO:0007669"/>
    <property type="project" value="UniProtKB-SubCell"/>
</dbReference>
<dbReference type="GO" id="GO:0008033">
    <property type="term" value="P:tRNA processing"/>
    <property type="evidence" value="ECO:0007669"/>
    <property type="project" value="UniProtKB-UniRule"/>
</dbReference>
<dbReference type="FunFam" id="3.40.1260.10:FF:000004">
    <property type="entry name" value="Sulfurtransferase TusC"/>
    <property type="match status" value="1"/>
</dbReference>
<dbReference type="Gene3D" id="3.40.1260.10">
    <property type="entry name" value="DsrEFH-like"/>
    <property type="match status" value="1"/>
</dbReference>
<dbReference type="HAMAP" id="MF_00389">
    <property type="entry name" value="Thiourid_synth_C"/>
    <property type="match status" value="1"/>
</dbReference>
<dbReference type="InterPro" id="IPR027396">
    <property type="entry name" value="DsrEFH-like"/>
</dbReference>
<dbReference type="InterPro" id="IPR003787">
    <property type="entry name" value="Sulphur_relay_DsrE/F-like"/>
</dbReference>
<dbReference type="InterPro" id="IPR037450">
    <property type="entry name" value="Sulphur_relay_TusC"/>
</dbReference>
<dbReference type="InterPro" id="IPR017462">
    <property type="entry name" value="Sulphur_relay_TusC/DsrF"/>
</dbReference>
<dbReference type="NCBIfam" id="NF001238">
    <property type="entry name" value="PRK00211.1"/>
    <property type="match status" value="1"/>
</dbReference>
<dbReference type="NCBIfam" id="TIGR03010">
    <property type="entry name" value="sulf_tusC_dsrF"/>
    <property type="match status" value="1"/>
</dbReference>
<dbReference type="PANTHER" id="PTHR38780">
    <property type="entry name" value="PROTEIN TUSC"/>
    <property type="match status" value="1"/>
</dbReference>
<dbReference type="PANTHER" id="PTHR38780:SF1">
    <property type="entry name" value="PROTEIN TUSC"/>
    <property type="match status" value="1"/>
</dbReference>
<dbReference type="Pfam" id="PF02635">
    <property type="entry name" value="DsrE"/>
    <property type="match status" value="1"/>
</dbReference>
<dbReference type="SUPFAM" id="SSF75169">
    <property type="entry name" value="DsrEFH-like"/>
    <property type="match status" value="1"/>
</dbReference>
<name>TUSC_ECO55</name>
<gene>
    <name evidence="1" type="primary">tusC</name>
    <name type="ordered locus">EC55989_3747</name>
</gene>
<protein>
    <recommendedName>
        <fullName evidence="1">Protein TusC</fullName>
    </recommendedName>
    <alternativeName>
        <fullName evidence="1">tRNA 2-thiouridine synthesizing protein C</fullName>
    </alternativeName>
</protein>
<proteinExistence type="inferred from homology"/>
<comment type="function">
    <text evidence="1">Part of a sulfur-relay system required for 2-thiolation of 5-methylaminomethyl-2-thiouridine (mnm(5)s(2)U) at tRNA wobble positions.</text>
</comment>
<comment type="subunit">
    <text evidence="1">Heterohexamer, formed by a dimer of trimers. The hexameric TusBCD complex contains 2 copies each of TusB, TusC and TusD. The TusBCD complex interacts with TusE.</text>
</comment>
<comment type="subcellular location">
    <subcellularLocation>
        <location evidence="1">Cytoplasm</location>
    </subcellularLocation>
</comment>
<comment type="similarity">
    <text evidence="1">Belongs to the DsrF/TusC family.</text>
</comment>
<feature type="chain" id="PRO_1000134409" description="Protein TusC">
    <location>
        <begin position="1"/>
        <end position="119"/>
    </location>
</feature>
<evidence type="ECO:0000255" key="1">
    <source>
        <dbReference type="HAMAP-Rule" id="MF_00389"/>
    </source>
</evidence>
<reference key="1">
    <citation type="journal article" date="2009" name="PLoS Genet.">
        <title>Organised genome dynamics in the Escherichia coli species results in highly diverse adaptive paths.</title>
        <authorList>
            <person name="Touchon M."/>
            <person name="Hoede C."/>
            <person name="Tenaillon O."/>
            <person name="Barbe V."/>
            <person name="Baeriswyl S."/>
            <person name="Bidet P."/>
            <person name="Bingen E."/>
            <person name="Bonacorsi S."/>
            <person name="Bouchier C."/>
            <person name="Bouvet O."/>
            <person name="Calteau A."/>
            <person name="Chiapello H."/>
            <person name="Clermont O."/>
            <person name="Cruveiller S."/>
            <person name="Danchin A."/>
            <person name="Diard M."/>
            <person name="Dossat C."/>
            <person name="Karoui M.E."/>
            <person name="Frapy E."/>
            <person name="Garry L."/>
            <person name="Ghigo J.M."/>
            <person name="Gilles A.M."/>
            <person name="Johnson J."/>
            <person name="Le Bouguenec C."/>
            <person name="Lescat M."/>
            <person name="Mangenot S."/>
            <person name="Martinez-Jehanne V."/>
            <person name="Matic I."/>
            <person name="Nassif X."/>
            <person name="Oztas S."/>
            <person name="Petit M.A."/>
            <person name="Pichon C."/>
            <person name="Rouy Z."/>
            <person name="Ruf C.S."/>
            <person name="Schneider D."/>
            <person name="Tourret J."/>
            <person name="Vacherie B."/>
            <person name="Vallenet D."/>
            <person name="Medigue C."/>
            <person name="Rocha E.P.C."/>
            <person name="Denamur E."/>
        </authorList>
    </citation>
    <scope>NUCLEOTIDE SEQUENCE [LARGE SCALE GENOMIC DNA]</scope>
    <source>
        <strain>55989 / EAEC</strain>
    </source>
</reference>
<keyword id="KW-0963">Cytoplasm</keyword>
<keyword id="KW-1185">Reference proteome</keyword>
<keyword id="KW-0819">tRNA processing</keyword>